<comment type="function">
    <text evidence="8 9 10 11 12 13 14 15 16">Histone methyltransferase which is required for the mono- and dimethylation of 'Lys-9' of histone H3 (PubMed:20107519, PubMed:22939621). This increases the efficiency of set-25-mediated trimethylation of histone H3 'Lys-9' (PubMed:22939621). Involved in the transcriptional repression of lin-3 which is required for the negative regulation of vulval cell fate specification during postembryonic development (PubMed:17634190). Has a role in blocking checkpoint signaling and mediating the transcriptional silencing of meiotic sex chromosome inactivation; a mechanism which enables checkpoint proteins to distinguish between the partnerless male X chromosome and asynapsed chromosomes thereby shielding the lone X from inappropriate activation of an apoptotic program (PubMed:21909284). Operates redundantly with set-25 to position chromatin at the nuclear periphery (PubMed:22939621). Required for small-RNA-induced H3K9 methylation (PubMed:26365259). Together with set-25, protects and stabilizes repeat-rich genomic regions by suppressing transcription-induced replication stress through methylation of H3K9 (PubMed:27668659). Together with spr-5, required for transgenerational fertility (PubMed:24685137).</text>
</comment>
<comment type="catalytic activity">
    <reaction evidence="17">
        <text>N(6)-methyl-L-lysyl(9)-[histone H3] + S-adenosyl-L-methionine = N(6),N(6)-dimethyl-L-lysyl(9)-[histone H3] + S-adenosyl-L-homocysteine + H(+)</text>
        <dbReference type="Rhea" id="RHEA:60284"/>
        <dbReference type="Rhea" id="RHEA-COMP:15541"/>
        <dbReference type="Rhea" id="RHEA-COMP:15542"/>
        <dbReference type="ChEBI" id="CHEBI:15378"/>
        <dbReference type="ChEBI" id="CHEBI:57856"/>
        <dbReference type="ChEBI" id="CHEBI:59789"/>
        <dbReference type="ChEBI" id="CHEBI:61929"/>
        <dbReference type="ChEBI" id="CHEBI:61976"/>
    </reaction>
</comment>
<comment type="catalytic activity">
    <reaction evidence="17">
        <text>L-lysyl(9)-[histone H3] + S-adenosyl-L-methionine = N(6)-methyl-L-lysyl(9)-[histone H3] + S-adenosyl-L-homocysteine + H(+)</text>
        <dbReference type="Rhea" id="RHEA:60280"/>
        <dbReference type="Rhea" id="RHEA-COMP:15542"/>
        <dbReference type="Rhea" id="RHEA-COMP:15546"/>
        <dbReference type="ChEBI" id="CHEBI:15378"/>
        <dbReference type="ChEBI" id="CHEBI:29969"/>
        <dbReference type="ChEBI" id="CHEBI:57856"/>
        <dbReference type="ChEBI" id="CHEBI:59789"/>
        <dbReference type="ChEBI" id="CHEBI:61929"/>
        <dbReference type="EC" id="2.1.1.367"/>
    </reaction>
</comment>
<comment type="subcellular location">
    <subcellularLocation>
        <location evidence="13">Nucleus</location>
    </subcellularLocation>
    <subcellularLocation>
        <location evidence="17">Chromosome</location>
    </subcellularLocation>
    <subcellularLocation>
        <location evidence="13">Cytoplasm</location>
    </subcellularLocation>
</comment>
<comment type="domain">
    <text evidence="1">In the pre-SET domain, Cys residues bind 3 zinc ions that are arranged in a triangular cluster; some of these Cys residues contribute to the binding of two zinc ions within the cluster.</text>
</comment>
<comment type="disruption phenotype">
    <text evidence="8 9 10 11 12 13 14">Induced vulval precursor cells in the absence of lin-15A (PubMed:15990876). Multi-vulval phenotype is apparent when grown at 24.5 degrees Celsius in the absence of lin-61 and when grown at 20 degrees Celsius in the absence of hpl-2 or met-1 (PubMed:17634190, PubMed:21437264). Reduced lamin interaction of chromosome arms in the absence of set-25 (PubMed:22939621). Increased apoptosis and increased occurrence of the recombination checkpoint XO germ lines (PubMed:21909284). High incidence of endomitotic oocytes (PubMed:20107519). In spr-5 null mutants, accelerates the progressive sterility over generations, which is seen in spr-5 mutants with complete sterility achieved by generation 2 (PubMed:24685137).</text>
</comment>
<comment type="similarity">
    <text evidence="5">Belongs to the class V-like SAM-binding methyltransferase superfamily.</text>
</comment>
<accession>P34544</accession>
<accession>Q8WTP5</accession>
<reference key="1">
    <citation type="journal article" date="1994" name="Nature">
        <title>2.2 Mb of contiguous nucleotide sequence from chromosome III of C. elegans.</title>
        <authorList>
            <person name="Wilson R."/>
            <person name="Ainscough R."/>
            <person name="Anderson K."/>
            <person name="Baynes C."/>
            <person name="Berks M."/>
            <person name="Bonfield J."/>
            <person name="Burton J."/>
            <person name="Connell M."/>
            <person name="Copsey T."/>
            <person name="Cooper J."/>
            <person name="Coulson A."/>
            <person name="Craxton M."/>
            <person name="Dear S."/>
            <person name="Du Z."/>
            <person name="Durbin R."/>
            <person name="Favello A."/>
            <person name="Fraser A."/>
            <person name="Fulton L."/>
            <person name="Gardner A."/>
            <person name="Green P."/>
            <person name="Hawkins T."/>
            <person name="Hillier L."/>
            <person name="Jier M."/>
            <person name="Johnston L."/>
            <person name="Jones M."/>
            <person name="Kershaw J."/>
            <person name="Kirsten J."/>
            <person name="Laisster N."/>
            <person name="Latreille P."/>
            <person name="Lightning J."/>
            <person name="Lloyd C."/>
            <person name="Mortimore B."/>
            <person name="O'Callaghan M."/>
            <person name="Parsons J."/>
            <person name="Percy C."/>
            <person name="Rifken L."/>
            <person name="Roopra A."/>
            <person name="Saunders D."/>
            <person name="Shownkeen R."/>
            <person name="Sims M."/>
            <person name="Smaldon N."/>
            <person name="Smith A."/>
            <person name="Smith M."/>
            <person name="Sonnhammer E."/>
            <person name="Staden R."/>
            <person name="Sulston J."/>
            <person name="Thierry-Mieg J."/>
            <person name="Thomas K."/>
            <person name="Vaudin M."/>
            <person name="Vaughan K."/>
            <person name="Waterston R."/>
            <person name="Watson A."/>
            <person name="Weinstock L."/>
            <person name="Wilkinson-Sproat J."/>
            <person name="Wohldman P."/>
        </authorList>
    </citation>
    <scope>NUCLEOTIDE SEQUENCE [LARGE SCALE GENOMIC DNA]</scope>
    <source>
        <strain>Bristol N2</strain>
    </source>
</reference>
<reference key="2">
    <citation type="journal article" date="1998" name="Science">
        <title>Genome sequence of the nematode C. elegans: a platform for investigating biology.</title>
        <authorList>
            <consortium name="The C. elegans sequencing consortium"/>
        </authorList>
    </citation>
    <scope>NUCLEOTIDE SEQUENCE [LARGE SCALE GENOMIC DNA]</scope>
    <source>
        <strain>Bristol N2</strain>
    </source>
</reference>
<reference key="3">
    <citation type="journal article" date="2005" name="EMBO J.">
        <title>Chromatin regulation and sumoylation in the inhibition of Ras-induced vulval development in Caenorhabditis elegans.</title>
        <authorList>
            <person name="Poulin G."/>
            <person name="Dong Y."/>
            <person name="Fraser A.G."/>
            <person name="Hopper N.A."/>
            <person name="Ahringer J."/>
        </authorList>
    </citation>
    <scope>FUNCTION</scope>
    <scope>DISRUPTION PHENOTYPE</scope>
</reference>
<reference key="4">
    <citation type="journal article" date="2007" name="Development">
        <title>Two C. elegans histone methyltransferases repress lin-3 EGF transcription to inhibit vulval development.</title>
        <authorList>
            <person name="Andersen E.C."/>
            <person name="Horvitz H.R."/>
        </authorList>
    </citation>
    <scope>FUNCTION</scope>
    <scope>DISRUPTION PHENOTYPE</scope>
</reference>
<reference key="5">
    <citation type="journal article" date="2010" name="PLoS Genet.">
        <title>Differential localization and independent acquisition of the H3K9me2 and H3K9me3 chromatin modifications in the Caenorhabditis elegans adult germ line.</title>
        <authorList>
            <person name="Bessler J.B."/>
            <person name="Andersen E.C."/>
            <person name="Villeneuve A.M."/>
        </authorList>
    </citation>
    <scope>FUNCTION</scope>
    <scope>DISRUPTION PHENOTYPE</scope>
</reference>
<reference key="6">
    <citation type="journal article" date="2011" name="PLoS Genet.">
        <title>H3K9me2/3 binding of the MBT domain protein LIN-61 is essential for Caenorhabditis elegans vulva development.</title>
        <authorList>
            <person name="Koester-Eiserfunke N."/>
            <person name="Fischle W."/>
        </authorList>
    </citation>
    <scope>FUNCTION</scope>
    <scope>DISRUPTION PHENOTYPE</scope>
</reference>
<reference key="7">
    <citation type="journal article" date="2011" name="PLoS Genet.">
        <title>Caenorhabditis elegans histone methyltransferase MET-2 shields the male X chromosome from checkpoint machinery and mediates meiotic sex chromosome inactivation.</title>
        <authorList>
            <person name="Checchi P.M."/>
            <person name="Engebrecht J."/>
        </authorList>
    </citation>
    <scope>FUNCTION</scope>
    <scope>DISRUPTION PHENOTYPE</scope>
</reference>
<reference key="8">
    <citation type="journal article" date="2012" name="Cell">
        <title>Step-wise methylation of histone H3K9 positions heterochromatin at the nuclear periphery.</title>
        <authorList>
            <person name="Towbin B.D."/>
            <person name="Gonzalez-Aguilera C."/>
            <person name="Sack R."/>
            <person name="Gaidatzis D."/>
            <person name="Kalck V."/>
            <person name="Meister P."/>
            <person name="Askjaer P."/>
            <person name="Gasser S.M."/>
        </authorList>
    </citation>
    <scope>FUNCTION</scope>
    <scope>SUBCELLULAR LOCATION</scope>
    <scope>DISRUPTION PHENOTYPE</scope>
</reference>
<reference key="9">
    <citation type="journal article" date="2014" name="Cell Rep.">
        <title>A histone methylation network regulates transgenerational epigenetic memory in C. elegans.</title>
        <authorList>
            <person name="Greer E.L."/>
            <person name="Beese-Sims S.E."/>
            <person name="Brookes E."/>
            <person name="Spadafora R."/>
            <person name="Zhu Y."/>
            <person name="Rothbart S.B."/>
            <person name="Aristizabal-Corrales D."/>
            <person name="Chen S."/>
            <person name="Badeaux A.I."/>
            <person name="Jin Q."/>
            <person name="Wang W."/>
            <person name="Strahl B.D."/>
            <person name="Colaiacovo M.P."/>
            <person name="Shi Y."/>
        </authorList>
    </citation>
    <scope>FUNCTION</scope>
    <scope>DISRUPTION PHENOTYPE</scope>
</reference>
<reference key="10">
    <citation type="journal article" date="2015" name="Curr. Biol.">
        <title>The Nrde pathway mediates small-RNA-directed histone H3 lysine 27 trimethylation in Caenorhabditis elegans.</title>
        <authorList>
            <person name="Mao H."/>
            <person name="Zhu C."/>
            <person name="Zong D."/>
            <person name="Weng C."/>
            <person name="Yang X."/>
            <person name="Huang H."/>
            <person name="Liu D."/>
            <person name="Feng X."/>
            <person name="Guang S."/>
        </authorList>
    </citation>
    <scope>FUNCTION</scope>
</reference>
<reference key="11">
    <citation type="journal article" date="2016" name="Nat. Genet.">
        <title>Histone H3K9 methylation is dispensable for Caenorhabditis elegans development but suppresses RNA:DNA hybrid-associated repeat instability.</title>
        <authorList>
            <person name="Zeller P."/>
            <person name="Padeken J."/>
            <person name="van Schendel R."/>
            <person name="Kalck V."/>
            <person name="Tijsterman M."/>
            <person name="Gasser S.M."/>
        </authorList>
    </citation>
    <scope>FUNCTION</scope>
</reference>
<keyword id="KW-0158">Chromosome</keyword>
<keyword id="KW-0175">Coiled coil</keyword>
<keyword id="KW-0963">Cytoplasm</keyword>
<keyword id="KW-0221">Differentiation</keyword>
<keyword id="KW-0469">Meiosis</keyword>
<keyword id="KW-0479">Metal-binding</keyword>
<keyword id="KW-0489">Methyltransferase</keyword>
<keyword id="KW-0539">Nucleus</keyword>
<keyword id="KW-1185">Reference proteome</keyword>
<keyword id="KW-0677">Repeat</keyword>
<keyword id="KW-0949">S-adenosyl-L-methionine</keyword>
<keyword id="KW-0726">Sexual differentiation</keyword>
<keyword id="KW-0804">Transcription</keyword>
<keyword id="KW-0805">Transcription regulation</keyword>
<keyword id="KW-0808">Transferase</keyword>
<keyword id="KW-0862">Zinc</keyword>
<evidence type="ECO:0000250" key="1"/>
<evidence type="ECO:0000255" key="2"/>
<evidence type="ECO:0000255" key="3">
    <source>
        <dbReference type="PROSITE-ProRule" id="PRU00155"/>
    </source>
</evidence>
<evidence type="ECO:0000255" key="4">
    <source>
        <dbReference type="PROSITE-ProRule" id="PRU00157"/>
    </source>
</evidence>
<evidence type="ECO:0000255" key="5">
    <source>
        <dbReference type="PROSITE-ProRule" id="PRU00190"/>
    </source>
</evidence>
<evidence type="ECO:0000255" key="6">
    <source>
        <dbReference type="PROSITE-ProRule" id="PRU00338"/>
    </source>
</evidence>
<evidence type="ECO:0000256" key="7">
    <source>
        <dbReference type="SAM" id="MobiDB-lite"/>
    </source>
</evidence>
<evidence type="ECO:0000269" key="8">
    <source>
    </source>
</evidence>
<evidence type="ECO:0000269" key="9">
    <source>
    </source>
</evidence>
<evidence type="ECO:0000269" key="10">
    <source>
    </source>
</evidence>
<evidence type="ECO:0000269" key="11">
    <source>
    </source>
</evidence>
<evidence type="ECO:0000269" key="12">
    <source>
    </source>
</evidence>
<evidence type="ECO:0000269" key="13">
    <source>
    </source>
</evidence>
<evidence type="ECO:0000269" key="14">
    <source>
    </source>
</evidence>
<evidence type="ECO:0000269" key="15">
    <source>
    </source>
</evidence>
<evidence type="ECO:0000269" key="16">
    <source>
    </source>
</evidence>
<evidence type="ECO:0000305" key="17">
    <source>
    </source>
</evidence>
<feature type="chain" id="PRO_0000186066" description="Histone-lysine N-methyltransferase met-2">
    <location>
        <begin position="1"/>
        <end position="1304"/>
    </location>
</feature>
<feature type="domain" description="MBD" evidence="6">
    <location>
        <begin position="834"/>
        <end position="909"/>
    </location>
</feature>
<feature type="domain" description="Pre-SET" evidence="4">
    <location>
        <begin position="971"/>
        <end position="1049"/>
    </location>
</feature>
<feature type="domain" description="SET" evidence="5">
    <location>
        <begin position="1052"/>
        <end position="1277"/>
    </location>
</feature>
<feature type="domain" description="Post-SET" evidence="3">
    <location>
        <begin position="1286"/>
        <end position="1302"/>
    </location>
</feature>
<feature type="region of interest" description="Disordered" evidence="7">
    <location>
        <begin position="1"/>
        <end position="31"/>
    </location>
</feature>
<feature type="region of interest" description="Disordered" evidence="7">
    <location>
        <begin position="1113"/>
        <end position="1201"/>
    </location>
</feature>
<feature type="coiled-coil region" evidence="2">
    <location>
        <begin position="97"/>
        <end position="129"/>
    </location>
</feature>
<feature type="compositionally biased region" description="Polar residues" evidence="7">
    <location>
        <begin position="1"/>
        <end position="16"/>
    </location>
</feature>
<feature type="compositionally biased region" description="Basic and acidic residues" evidence="7">
    <location>
        <begin position="1113"/>
        <end position="1122"/>
    </location>
</feature>
<feature type="compositionally biased region" description="Acidic residues" evidence="7">
    <location>
        <begin position="1128"/>
        <end position="1144"/>
    </location>
</feature>
<feature type="compositionally biased region" description="Basic and acidic residues" evidence="7">
    <location>
        <begin position="1152"/>
        <end position="1165"/>
    </location>
</feature>
<feature type="compositionally biased region" description="Basic residues" evidence="7">
    <location>
        <begin position="1166"/>
        <end position="1178"/>
    </location>
</feature>
<feature type="compositionally biased region" description="Basic and acidic residues" evidence="7">
    <location>
        <begin position="1182"/>
        <end position="1201"/>
    </location>
</feature>
<feature type="binding site" evidence="1">
    <location>
        <position position="973"/>
    </location>
    <ligand>
        <name>Zn(2+)</name>
        <dbReference type="ChEBI" id="CHEBI:29105"/>
        <label>1</label>
    </ligand>
</feature>
<feature type="binding site" evidence="1">
    <location>
        <position position="973"/>
    </location>
    <ligand>
        <name>Zn(2+)</name>
        <dbReference type="ChEBI" id="CHEBI:29105"/>
        <label>2</label>
    </ligand>
</feature>
<feature type="binding site" evidence="1">
    <location>
        <position position="975"/>
    </location>
    <ligand>
        <name>Zn(2+)</name>
        <dbReference type="ChEBI" id="CHEBI:29105"/>
        <label>1</label>
    </ligand>
</feature>
<feature type="binding site" evidence="1">
    <location>
        <position position="979"/>
    </location>
    <ligand>
        <name>Zn(2+)</name>
        <dbReference type="ChEBI" id="CHEBI:29105"/>
        <label>1</label>
    </ligand>
</feature>
<feature type="binding site" evidence="1">
    <location>
        <position position="979"/>
    </location>
    <ligand>
        <name>Zn(2+)</name>
        <dbReference type="ChEBI" id="CHEBI:29105"/>
        <label>3</label>
    </ligand>
</feature>
<feature type="binding site" evidence="1">
    <location>
        <position position="985"/>
    </location>
    <ligand>
        <name>Zn(2+)</name>
        <dbReference type="ChEBI" id="CHEBI:29105"/>
        <label>1</label>
    </ligand>
</feature>
<feature type="binding site" evidence="1">
    <location>
        <position position="987"/>
    </location>
    <ligand>
        <name>Zn(2+)</name>
        <dbReference type="ChEBI" id="CHEBI:29105"/>
        <label>2</label>
    </ligand>
</feature>
<feature type="binding site" evidence="1">
    <location>
        <position position="1030"/>
    </location>
    <ligand>
        <name>Zn(2+)</name>
        <dbReference type="ChEBI" id="CHEBI:29105"/>
        <label>2</label>
    </ligand>
</feature>
<feature type="binding site" evidence="1">
    <location>
        <position position="1030"/>
    </location>
    <ligand>
        <name>Zn(2+)</name>
        <dbReference type="ChEBI" id="CHEBI:29105"/>
        <label>3</label>
    </ligand>
</feature>
<feature type="binding site" evidence="1">
    <location>
        <position position="1034"/>
    </location>
    <ligand>
        <name>Zn(2+)</name>
        <dbReference type="ChEBI" id="CHEBI:29105"/>
        <label>2</label>
    </ligand>
</feature>
<feature type="binding site" evidence="1">
    <location>
        <position position="1036"/>
    </location>
    <ligand>
        <name>Zn(2+)</name>
        <dbReference type="ChEBI" id="CHEBI:29105"/>
        <label>3</label>
    </ligand>
</feature>
<feature type="binding site" evidence="1">
    <location>
        <position position="1041"/>
    </location>
    <ligand>
        <name>Zn(2+)</name>
        <dbReference type="ChEBI" id="CHEBI:29105"/>
        <label>3</label>
    </ligand>
</feature>
<feature type="binding site" evidence="1">
    <location>
        <begin position="1062"/>
        <end position="1064"/>
    </location>
    <ligand>
        <name>S-adenosyl-L-methionine</name>
        <dbReference type="ChEBI" id="CHEBI:59789"/>
    </ligand>
</feature>
<feature type="binding site" evidence="5">
    <location>
        <position position="1098"/>
    </location>
    <ligand>
        <name>S-adenosyl-L-methionine</name>
        <dbReference type="ChEBI" id="CHEBI:59789"/>
    </ligand>
</feature>
<feature type="binding site" evidence="5">
    <location>
        <position position="1100"/>
    </location>
    <ligand>
        <name>S-adenosyl-L-methionine</name>
        <dbReference type="ChEBI" id="CHEBI:59789"/>
    </ligand>
</feature>
<feature type="binding site" evidence="5">
    <location>
        <position position="1231"/>
    </location>
    <ligand>
        <name>S-adenosyl-L-methionine</name>
        <dbReference type="ChEBI" id="CHEBI:59789"/>
    </ligand>
</feature>
<feature type="binding site" evidence="1">
    <location>
        <begin position="1234"/>
        <end position="1235"/>
    </location>
    <ligand>
        <name>S-adenosyl-L-methionine</name>
        <dbReference type="ChEBI" id="CHEBI:59789"/>
    </ligand>
</feature>
<feature type="binding site" evidence="1">
    <location>
        <position position="1237"/>
    </location>
    <ligand>
        <name>Zn(2+)</name>
        <dbReference type="ChEBI" id="CHEBI:29105"/>
        <label>4</label>
    </ligand>
</feature>
<feature type="binding site" evidence="1">
    <location>
        <position position="1290"/>
    </location>
    <ligand>
        <name>Zn(2+)</name>
        <dbReference type="ChEBI" id="CHEBI:29105"/>
        <label>4</label>
    </ligand>
</feature>
<feature type="binding site" evidence="1">
    <location>
        <position position="1292"/>
    </location>
    <ligand>
        <name>Zn(2+)</name>
        <dbReference type="ChEBI" id="CHEBI:29105"/>
        <label>4</label>
    </ligand>
</feature>
<feature type="binding site" evidence="1">
    <location>
        <position position="1297"/>
    </location>
    <ligand>
        <name>Zn(2+)</name>
        <dbReference type="ChEBI" id="CHEBI:29105"/>
        <label>4</label>
    </ligand>
</feature>
<gene>
    <name type="primary">met-2</name>
    <name type="ORF">R05D3.11</name>
</gene>
<proteinExistence type="inferred from homology"/>
<organism>
    <name type="scientific">Caenorhabditis elegans</name>
    <dbReference type="NCBI Taxonomy" id="6239"/>
    <lineage>
        <taxon>Eukaryota</taxon>
        <taxon>Metazoa</taxon>
        <taxon>Ecdysozoa</taxon>
        <taxon>Nematoda</taxon>
        <taxon>Chromadorea</taxon>
        <taxon>Rhabditida</taxon>
        <taxon>Rhabditina</taxon>
        <taxon>Rhabditomorpha</taxon>
        <taxon>Rhabditoidea</taxon>
        <taxon>Rhabditidae</taxon>
        <taxon>Peloderinae</taxon>
        <taxon>Caenorhabditis</taxon>
    </lineage>
</organism>
<protein>
    <recommendedName>
        <fullName>Histone-lysine N-methyltransferase met-2</fullName>
        <ecNumber evidence="17">2.1.1.-</ecNumber>
        <ecNumber evidence="17">2.1.1.367</ecNumber>
    </recommendedName>
</protein>
<dbReference type="EC" id="2.1.1.-" evidence="17"/>
<dbReference type="EC" id="2.1.1.367" evidence="17"/>
<dbReference type="EMBL" id="FO081667">
    <property type="protein sequence ID" value="CCD73198.2"/>
    <property type="molecule type" value="Genomic_DNA"/>
</dbReference>
<dbReference type="RefSeq" id="NP_498848.4">
    <property type="nucleotide sequence ID" value="NM_066447.7"/>
</dbReference>
<dbReference type="BioGRID" id="41387">
    <property type="interactions" value="5"/>
</dbReference>
<dbReference type="FunCoup" id="P34544">
    <property type="interactions" value="208"/>
</dbReference>
<dbReference type="STRING" id="6239.R05D3.11.1"/>
<dbReference type="PaxDb" id="6239-R05D3.11"/>
<dbReference type="PeptideAtlas" id="P34544"/>
<dbReference type="EnsemblMetazoa" id="R05D3.11.1">
    <property type="protein sequence ID" value="R05D3.11.1"/>
    <property type="gene ID" value="WBGene00019883"/>
</dbReference>
<dbReference type="GeneID" id="176183"/>
<dbReference type="KEGG" id="cel:CELE_R05D3.11"/>
<dbReference type="UCSC" id="R05D3.11">
    <property type="organism name" value="c. elegans"/>
</dbReference>
<dbReference type="AGR" id="WB:WBGene00019883"/>
<dbReference type="CTD" id="176183"/>
<dbReference type="WormBase" id="R05D3.11">
    <property type="protein sequence ID" value="CE47959"/>
    <property type="gene ID" value="WBGene00019883"/>
    <property type="gene designation" value="met-2"/>
</dbReference>
<dbReference type="eggNOG" id="KOG1141">
    <property type="taxonomic scope" value="Eukaryota"/>
</dbReference>
<dbReference type="GeneTree" id="ENSGT00940000169356"/>
<dbReference type="HOGENOM" id="CLU_263084_0_0_1"/>
<dbReference type="InParanoid" id="P34544"/>
<dbReference type="OMA" id="HAVNLEH"/>
<dbReference type="OrthoDB" id="5792673at2759"/>
<dbReference type="PhylomeDB" id="P34544"/>
<dbReference type="Reactome" id="R-CEL-3214841">
    <property type="pathway name" value="PKMTs methylate histone lysines"/>
</dbReference>
<dbReference type="PRO" id="PR:P34544"/>
<dbReference type="Proteomes" id="UP000001940">
    <property type="component" value="Chromosome III"/>
</dbReference>
<dbReference type="Bgee" id="WBGene00019883">
    <property type="expression patterns" value="Expressed in germ line (C elegans) and 9 other cell types or tissues"/>
</dbReference>
<dbReference type="GO" id="GO:0005694">
    <property type="term" value="C:chromosome"/>
    <property type="evidence" value="ECO:0007669"/>
    <property type="project" value="UniProtKB-SubCell"/>
</dbReference>
<dbReference type="GO" id="GO:0005737">
    <property type="term" value="C:cytoplasm"/>
    <property type="evidence" value="ECO:0000314"/>
    <property type="project" value="WormBase"/>
</dbReference>
<dbReference type="GO" id="GO:0005634">
    <property type="term" value="C:nucleus"/>
    <property type="evidence" value="ECO:0000318"/>
    <property type="project" value="GO_Central"/>
</dbReference>
<dbReference type="GO" id="GO:0003677">
    <property type="term" value="F:DNA binding"/>
    <property type="evidence" value="ECO:0007669"/>
    <property type="project" value="InterPro"/>
</dbReference>
<dbReference type="GO" id="GO:0046975">
    <property type="term" value="F:histone H3K36 methyltransferase activity"/>
    <property type="evidence" value="ECO:0000315"/>
    <property type="project" value="UniProtKB"/>
</dbReference>
<dbReference type="GO" id="GO:0046974">
    <property type="term" value="F:histone H3K9 methyltransferase activity"/>
    <property type="evidence" value="ECO:0000315"/>
    <property type="project" value="UniProtKB"/>
</dbReference>
<dbReference type="GO" id="GO:0140947">
    <property type="term" value="F:histone H3K9me2 methyltransferase activity"/>
    <property type="evidence" value="ECO:0007669"/>
    <property type="project" value="RHEA"/>
</dbReference>
<dbReference type="GO" id="GO:0008270">
    <property type="term" value="F:zinc ion binding"/>
    <property type="evidence" value="ECO:0007669"/>
    <property type="project" value="InterPro"/>
</dbReference>
<dbReference type="GO" id="GO:0040029">
    <property type="term" value="P:epigenetic regulation of gene expression"/>
    <property type="evidence" value="ECO:0000315"/>
    <property type="project" value="WormBase"/>
</dbReference>
<dbReference type="GO" id="GO:0070828">
    <property type="term" value="P:heterochromatin organization"/>
    <property type="evidence" value="ECO:0000318"/>
    <property type="project" value="GO_Central"/>
</dbReference>
<dbReference type="GO" id="GO:0051321">
    <property type="term" value="P:meiotic cell cycle"/>
    <property type="evidence" value="ECO:0007669"/>
    <property type="project" value="UniProtKB-KW"/>
</dbReference>
<dbReference type="GO" id="GO:0032259">
    <property type="term" value="P:methylation"/>
    <property type="evidence" value="ECO:0007669"/>
    <property type="project" value="UniProtKB-KW"/>
</dbReference>
<dbReference type="GO" id="GO:0010629">
    <property type="term" value="P:negative regulation of gene expression"/>
    <property type="evidence" value="ECO:0000315"/>
    <property type="project" value="UniProtKB"/>
</dbReference>
<dbReference type="GO" id="GO:0045835">
    <property type="term" value="P:negative regulation of meiotic nuclear division"/>
    <property type="evidence" value="ECO:0000315"/>
    <property type="project" value="UniProtKB"/>
</dbReference>
<dbReference type="GO" id="GO:0000122">
    <property type="term" value="P:negative regulation of transcription by RNA polymerase II"/>
    <property type="evidence" value="ECO:0000316"/>
    <property type="project" value="WormBase"/>
</dbReference>
<dbReference type="GO" id="GO:0040027">
    <property type="term" value="P:negative regulation of vulval development"/>
    <property type="evidence" value="ECO:0000316"/>
    <property type="project" value="WormBase"/>
</dbReference>
<dbReference type="GO" id="GO:0007548">
    <property type="term" value="P:sex differentiation"/>
    <property type="evidence" value="ECO:0007669"/>
    <property type="project" value="UniProtKB-KW"/>
</dbReference>
<dbReference type="GO" id="GO:0072325">
    <property type="term" value="P:vulval cell fate commitment"/>
    <property type="evidence" value="ECO:0000315"/>
    <property type="project" value="UniProtKB"/>
</dbReference>
<dbReference type="CDD" id="cd01395">
    <property type="entry name" value="HMT_MBD"/>
    <property type="match status" value="1"/>
</dbReference>
<dbReference type="CDD" id="cd10517">
    <property type="entry name" value="SET_SETDB1"/>
    <property type="match status" value="1"/>
</dbReference>
<dbReference type="Gene3D" id="3.30.890.10">
    <property type="entry name" value="Methyl-cpg-binding Protein 2, Chain A"/>
    <property type="match status" value="1"/>
</dbReference>
<dbReference type="Gene3D" id="2.170.270.10">
    <property type="entry name" value="SET domain"/>
    <property type="match status" value="1"/>
</dbReference>
<dbReference type="InterPro" id="IPR016177">
    <property type="entry name" value="DNA-bd_dom_sf"/>
</dbReference>
<dbReference type="InterPro" id="IPR001739">
    <property type="entry name" value="Methyl_CpG_DNA-bd"/>
</dbReference>
<dbReference type="InterPro" id="IPR003616">
    <property type="entry name" value="Post-SET_dom"/>
</dbReference>
<dbReference type="InterPro" id="IPR007728">
    <property type="entry name" value="Pre-SET_dom"/>
</dbReference>
<dbReference type="InterPro" id="IPR001214">
    <property type="entry name" value="SET_dom"/>
</dbReference>
<dbReference type="InterPro" id="IPR046341">
    <property type="entry name" value="SET_dom_sf"/>
</dbReference>
<dbReference type="InterPro" id="IPR047232">
    <property type="entry name" value="SETDB1/2-like_MBD"/>
</dbReference>
<dbReference type="InterPro" id="IPR051516">
    <property type="entry name" value="SETDB_methyltransferase"/>
</dbReference>
<dbReference type="PANTHER" id="PTHR46024">
    <property type="entry name" value="HISTONE-LYSINE N-METHYLTRANSFERASE EGGLESS"/>
    <property type="match status" value="1"/>
</dbReference>
<dbReference type="PANTHER" id="PTHR46024:SF1">
    <property type="entry name" value="HISTONE-LYSINE N-METHYLTRANSFERASE EGGLESS"/>
    <property type="match status" value="1"/>
</dbReference>
<dbReference type="Pfam" id="PF01429">
    <property type="entry name" value="MBD"/>
    <property type="match status" value="1"/>
</dbReference>
<dbReference type="Pfam" id="PF05033">
    <property type="entry name" value="Pre-SET"/>
    <property type="match status" value="1"/>
</dbReference>
<dbReference type="Pfam" id="PF00856">
    <property type="entry name" value="SET"/>
    <property type="match status" value="1"/>
</dbReference>
<dbReference type="SMART" id="SM00391">
    <property type="entry name" value="MBD"/>
    <property type="match status" value="1"/>
</dbReference>
<dbReference type="SMART" id="SM00508">
    <property type="entry name" value="PostSET"/>
    <property type="match status" value="1"/>
</dbReference>
<dbReference type="SMART" id="SM00468">
    <property type="entry name" value="PreSET"/>
    <property type="match status" value="1"/>
</dbReference>
<dbReference type="SMART" id="SM00317">
    <property type="entry name" value="SET"/>
    <property type="match status" value="1"/>
</dbReference>
<dbReference type="SUPFAM" id="SSF54171">
    <property type="entry name" value="DNA-binding domain"/>
    <property type="match status" value="1"/>
</dbReference>
<dbReference type="SUPFAM" id="SSF82199">
    <property type="entry name" value="SET domain"/>
    <property type="match status" value="1"/>
</dbReference>
<dbReference type="PROSITE" id="PS50982">
    <property type="entry name" value="MBD"/>
    <property type="match status" value="1"/>
</dbReference>
<dbReference type="PROSITE" id="PS50868">
    <property type="entry name" value="POST_SET"/>
    <property type="match status" value="1"/>
</dbReference>
<dbReference type="PROSITE" id="PS50867">
    <property type="entry name" value="PRE_SET"/>
    <property type="match status" value="1"/>
</dbReference>
<dbReference type="PROSITE" id="PS50280">
    <property type="entry name" value="SET"/>
    <property type="match status" value="1"/>
</dbReference>
<sequence length="1304" mass="148155">MDQQEPSNNVDTSSILSDDGMETQEQSSFVTATIDLTVDDYDETEIQEILDNGKAEEGTDEDSDLVEGILNANSDVQALLDAPSEQVAQALNSFFGNESEQEAVAAQRRVDAEKTAKDEAELKQQEEAEDLIIEDSIVKTDEEKQAVRRLKINEFLSWFTRLLPEQFKNFEFTNPNYLTESISDSPVVNVDKCKEIVKSFKESESLEGLSQKYELIDEDVLVAAICIGVLDTNNEEDVDFNVLCDDRIDDWSIEKCVTFLDYPNTGLNSKNGPLRFMQFTVTSPASAILMLTLIRLREEGHPCRLDFDSNPTDDLLLNFDQVEFSNNIIDTAVKYWDDQKENGAQDKIGRELNDFFHEIESTSAEFKQHFENAVGSRNEIIQLVNEKIPDFDGTEAAVNESFTSDQRTEIINSRAIMETLKAEMKLAIAEAQKVYDTKTDFEKFFVLTVGDFCLARANPSDDAELTYAIVQDRVDAMTYKVKFIDTSQIRECNIRDLAMTTQGMYDPSLNTFGDVGLRVACRQVISSSQFGKKTIWLTGTAAGRRRAHRSDFLIFFDNGTDAYVSAPTMPGEPGYEVASEKKSVFSLKEMIAKMNAAQIAIMVGQPVGKEGNLDYFLTFHWIRQSHRSAYIRDFMKEFPEWPLLKMPVGMRICLYNSLVDRRKKMVTVIGTDRAFAIVRHEAPNPLAPGNRCTDFPCNDRNHQHIDEKIYRGSHRLEGAAHKKHMISTNNNLSQRRKDQLQSQFEPTDMIRSMPERNHQQVVKKKTTGTNQNVASTNDAKSKREIEIRKKNQFLFNKIIVPIPVLTPLENLKAHAQCGPDCLQKMDADPYEARFHRNSPIHTPLLCGWRRIMYTMSTGKKRGAVKKNIIYFSPCGAALHQISDVSEYIHVTRSLLTIDCFSFDARIDTATYITVDDKYLKVADFSLGTEGIPIPLVNSVDNDEPPSLEYSKRRFQYNDQVDISSVSRDFCSGCSCDGDCSDASKCECQQLSIEAMKRLPHNLQFDGHDELVPHYQNRLLSSKVISGLYECNDQCSCHRKSCYNRVVQNNIKYPMHIFKTAQSGWGVRALTDIPQSTFICTYVGAILTDDLADELRNADQYFADLDLKDTVELEKGREDHETDFGYGGDESDYDDEEGSDGDSGDDVMNKMVKRQDSSESGEETKRLTRQKRKQSKKSGKGGSVEKDDTTPRDSMEKDNIESKDEPVFNWDKYFEPFPLYVIDAKQRGNLGRFLNHSCDPNVHVQHVMYDTHDLRLPWVAFFTRKYVKAGDELTWDYQYTQDQTATTQLTCHCGAENCTGRLLKS</sequence>
<name>MET2_CAEEL</name>